<comment type="function">
    <text evidence="1">Endonuclease that specifically degrades the RNA of RNA-DNA hybrids.</text>
</comment>
<comment type="catalytic activity">
    <reaction evidence="1">
        <text>Endonucleolytic cleavage to 5'-phosphomonoester.</text>
        <dbReference type="EC" id="3.1.26.4"/>
    </reaction>
</comment>
<comment type="cofactor">
    <cofactor evidence="1">
        <name>Mn(2+)</name>
        <dbReference type="ChEBI" id="CHEBI:29035"/>
    </cofactor>
    <cofactor evidence="1">
        <name>Mg(2+)</name>
        <dbReference type="ChEBI" id="CHEBI:18420"/>
    </cofactor>
    <text evidence="1">Manganese or magnesium. Binds 1 divalent metal ion per monomer in the absence of substrate. May bind a second metal ion after substrate binding.</text>
</comment>
<comment type="subcellular location">
    <subcellularLocation>
        <location evidence="1">Cytoplasm</location>
    </subcellularLocation>
</comment>
<comment type="similarity">
    <text evidence="1">Belongs to the RNase HII family.</text>
</comment>
<reference key="1">
    <citation type="journal article" date="2007" name="PLoS ONE">
        <title>Genome sequencing shows that European isolates of Francisella tularensis subspecies tularensis are almost identical to US laboratory strain Schu S4.</title>
        <authorList>
            <person name="Chaudhuri R.R."/>
            <person name="Ren C.-P."/>
            <person name="Desmond L."/>
            <person name="Vincent G.A."/>
            <person name="Silman N.J."/>
            <person name="Brehm J.K."/>
            <person name="Elmore M.J."/>
            <person name="Hudson M.J."/>
            <person name="Forsman M."/>
            <person name="Isherwood K.E."/>
            <person name="Gurycova D."/>
            <person name="Minton N.P."/>
            <person name="Titball R.W."/>
            <person name="Pallen M.J."/>
            <person name="Vipond R."/>
        </authorList>
    </citation>
    <scope>NUCLEOTIDE SEQUENCE [LARGE SCALE GENOMIC DNA]</scope>
    <source>
        <strain>FSC 198</strain>
    </source>
</reference>
<gene>
    <name evidence="1" type="primary">rnhB</name>
    <name type="ordered locus">FTF1278c</name>
</gene>
<protein>
    <recommendedName>
        <fullName evidence="1">Ribonuclease HII</fullName>
        <shortName evidence="1">RNase HII</shortName>
        <ecNumber evidence="1">3.1.26.4</ecNumber>
    </recommendedName>
</protein>
<accession>Q14GW0</accession>
<organism>
    <name type="scientific">Francisella tularensis subsp. tularensis (strain FSC 198)</name>
    <dbReference type="NCBI Taxonomy" id="393115"/>
    <lineage>
        <taxon>Bacteria</taxon>
        <taxon>Pseudomonadati</taxon>
        <taxon>Pseudomonadota</taxon>
        <taxon>Gammaproteobacteria</taxon>
        <taxon>Thiotrichales</taxon>
        <taxon>Francisellaceae</taxon>
        <taxon>Francisella</taxon>
    </lineage>
</organism>
<feature type="chain" id="PRO_1000031141" description="Ribonuclease HII">
    <location>
        <begin position="1"/>
        <end position="187"/>
    </location>
</feature>
<feature type="domain" description="RNase H type-2" evidence="2">
    <location>
        <begin position="1"/>
        <end position="187"/>
    </location>
</feature>
<feature type="binding site" evidence="1">
    <location>
        <position position="7"/>
    </location>
    <ligand>
        <name>a divalent metal cation</name>
        <dbReference type="ChEBI" id="CHEBI:60240"/>
    </ligand>
</feature>
<feature type="binding site" evidence="1">
    <location>
        <position position="8"/>
    </location>
    <ligand>
        <name>a divalent metal cation</name>
        <dbReference type="ChEBI" id="CHEBI:60240"/>
    </ligand>
</feature>
<feature type="binding site" evidence="1">
    <location>
        <position position="99"/>
    </location>
    <ligand>
        <name>a divalent metal cation</name>
        <dbReference type="ChEBI" id="CHEBI:60240"/>
    </ligand>
</feature>
<name>RNH2_FRAT1</name>
<dbReference type="EC" id="3.1.26.4" evidence="1"/>
<dbReference type="EMBL" id="AM286280">
    <property type="protein sequence ID" value="CAL09294.1"/>
    <property type="molecule type" value="Genomic_DNA"/>
</dbReference>
<dbReference type="RefSeq" id="WP_003021956.1">
    <property type="nucleotide sequence ID" value="NC_008245.1"/>
</dbReference>
<dbReference type="SMR" id="Q14GW0"/>
<dbReference type="KEGG" id="ftf:FTF1278c"/>
<dbReference type="HOGENOM" id="CLU_036532_3_2_6"/>
<dbReference type="GO" id="GO:0005737">
    <property type="term" value="C:cytoplasm"/>
    <property type="evidence" value="ECO:0007669"/>
    <property type="project" value="UniProtKB-SubCell"/>
</dbReference>
<dbReference type="GO" id="GO:0032299">
    <property type="term" value="C:ribonuclease H2 complex"/>
    <property type="evidence" value="ECO:0007669"/>
    <property type="project" value="TreeGrafter"/>
</dbReference>
<dbReference type="GO" id="GO:0030145">
    <property type="term" value="F:manganese ion binding"/>
    <property type="evidence" value="ECO:0007669"/>
    <property type="project" value="UniProtKB-UniRule"/>
</dbReference>
<dbReference type="GO" id="GO:0003723">
    <property type="term" value="F:RNA binding"/>
    <property type="evidence" value="ECO:0007669"/>
    <property type="project" value="InterPro"/>
</dbReference>
<dbReference type="GO" id="GO:0004523">
    <property type="term" value="F:RNA-DNA hybrid ribonuclease activity"/>
    <property type="evidence" value="ECO:0007669"/>
    <property type="project" value="UniProtKB-UniRule"/>
</dbReference>
<dbReference type="GO" id="GO:0043137">
    <property type="term" value="P:DNA replication, removal of RNA primer"/>
    <property type="evidence" value="ECO:0007669"/>
    <property type="project" value="TreeGrafter"/>
</dbReference>
<dbReference type="GO" id="GO:0006298">
    <property type="term" value="P:mismatch repair"/>
    <property type="evidence" value="ECO:0007669"/>
    <property type="project" value="TreeGrafter"/>
</dbReference>
<dbReference type="CDD" id="cd07182">
    <property type="entry name" value="RNase_HII_bacteria_HII_like"/>
    <property type="match status" value="1"/>
</dbReference>
<dbReference type="FunFam" id="3.30.420.10:FF:000006">
    <property type="entry name" value="Ribonuclease HII"/>
    <property type="match status" value="1"/>
</dbReference>
<dbReference type="Gene3D" id="3.30.420.10">
    <property type="entry name" value="Ribonuclease H-like superfamily/Ribonuclease H"/>
    <property type="match status" value="1"/>
</dbReference>
<dbReference type="HAMAP" id="MF_00052_B">
    <property type="entry name" value="RNase_HII_B"/>
    <property type="match status" value="1"/>
</dbReference>
<dbReference type="InterPro" id="IPR022898">
    <property type="entry name" value="RNase_HII"/>
</dbReference>
<dbReference type="InterPro" id="IPR001352">
    <property type="entry name" value="RNase_HII/HIII"/>
</dbReference>
<dbReference type="InterPro" id="IPR024567">
    <property type="entry name" value="RNase_HII/HIII_dom"/>
</dbReference>
<dbReference type="InterPro" id="IPR012337">
    <property type="entry name" value="RNaseH-like_sf"/>
</dbReference>
<dbReference type="InterPro" id="IPR036397">
    <property type="entry name" value="RNaseH_sf"/>
</dbReference>
<dbReference type="NCBIfam" id="NF000595">
    <property type="entry name" value="PRK00015.1-3"/>
    <property type="match status" value="1"/>
</dbReference>
<dbReference type="NCBIfam" id="NF000596">
    <property type="entry name" value="PRK00015.1-4"/>
    <property type="match status" value="1"/>
</dbReference>
<dbReference type="PANTHER" id="PTHR10954">
    <property type="entry name" value="RIBONUCLEASE H2 SUBUNIT A"/>
    <property type="match status" value="1"/>
</dbReference>
<dbReference type="PANTHER" id="PTHR10954:SF18">
    <property type="entry name" value="RIBONUCLEASE HII"/>
    <property type="match status" value="1"/>
</dbReference>
<dbReference type="Pfam" id="PF01351">
    <property type="entry name" value="RNase_HII"/>
    <property type="match status" value="1"/>
</dbReference>
<dbReference type="SUPFAM" id="SSF53098">
    <property type="entry name" value="Ribonuclease H-like"/>
    <property type="match status" value="1"/>
</dbReference>
<dbReference type="PROSITE" id="PS51975">
    <property type="entry name" value="RNASE_H_2"/>
    <property type="match status" value="1"/>
</dbReference>
<keyword id="KW-0963">Cytoplasm</keyword>
<keyword id="KW-0255">Endonuclease</keyword>
<keyword id="KW-0378">Hydrolase</keyword>
<keyword id="KW-0464">Manganese</keyword>
<keyword id="KW-0479">Metal-binding</keyword>
<keyword id="KW-0540">Nuclease</keyword>
<evidence type="ECO:0000255" key="1">
    <source>
        <dbReference type="HAMAP-Rule" id="MF_00052"/>
    </source>
</evidence>
<evidence type="ECO:0000255" key="2">
    <source>
        <dbReference type="PROSITE-ProRule" id="PRU01319"/>
    </source>
</evidence>
<sequence>MIILGIDEAGRGPLSGPVVAAGVILDQDKIIDGLADSKKLTEKKRQSLYQQIITHAKAYTIVEISPQQIDELNILQATLKAMHQVANNLERQFDKVLVDGNKLPNWDYNSEAIVKGDSKIIEISAASILAKVHRDNICLEHDRLYPQYGFAKHKGYPTKEHLENIKKYGVLDIHRKSYKPVQVLLNE</sequence>
<proteinExistence type="inferred from homology"/>